<accession>Q9XER9</accession>
<feature type="chain" id="PRO_0000418856" description="ENHANCER OF AG-4 protein 2">
    <location>
        <begin position="1"/>
        <end position="1392"/>
    </location>
</feature>
<feature type="domain" description="PWWP" evidence="1">
    <location>
        <begin position="20"/>
        <end position="77"/>
    </location>
</feature>
<feature type="domain" description="CID" evidence="2">
    <location>
        <begin position="771"/>
        <end position="912"/>
    </location>
</feature>
<feature type="region of interest" description="Disordered" evidence="3">
    <location>
        <begin position="184"/>
        <end position="354"/>
    </location>
</feature>
<feature type="region of interest" description="Disordered" evidence="3">
    <location>
        <begin position="384"/>
        <end position="428"/>
    </location>
</feature>
<feature type="region of interest" description="Disordered" evidence="3">
    <location>
        <begin position="575"/>
        <end position="613"/>
    </location>
</feature>
<feature type="region of interest" description="Disordered" evidence="3">
    <location>
        <begin position="723"/>
        <end position="766"/>
    </location>
</feature>
<feature type="region of interest" description="Disordered" evidence="3">
    <location>
        <begin position="957"/>
        <end position="986"/>
    </location>
</feature>
<feature type="region of interest" description="Disordered" evidence="3">
    <location>
        <begin position="1014"/>
        <end position="1356"/>
    </location>
</feature>
<feature type="region of interest" description="Disordered" evidence="3">
    <location>
        <begin position="1369"/>
        <end position="1392"/>
    </location>
</feature>
<feature type="compositionally biased region" description="Polar residues" evidence="3">
    <location>
        <begin position="184"/>
        <end position="194"/>
    </location>
</feature>
<feature type="compositionally biased region" description="Basic and acidic residues" evidence="3">
    <location>
        <begin position="196"/>
        <end position="215"/>
    </location>
</feature>
<feature type="compositionally biased region" description="Basic and acidic residues" evidence="3">
    <location>
        <begin position="239"/>
        <end position="258"/>
    </location>
</feature>
<feature type="compositionally biased region" description="Basic and acidic residues" evidence="3">
    <location>
        <begin position="311"/>
        <end position="345"/>
    </location>
</feature>
<feature type="compositionally biased region" description="Polar residues" evidence="3">
    <location>
        <begin position="391"/>
        <end position="400"/>
    </location>
</feature>
<feature type="compositionally biased region" description="Basic and acidic residues" evidence="3">
    <location>
        <begin position="401"/>
        <end position="417"/>
    </location>
</feature>
<feature type="compositionally biased region" description="Polar residues" evidence="3">
    <location>
        <begin position="591"/>
        <end position="601"/>
    </location>
</feature>
<feature type="compositionally biased region" description="Polar residues" evidence="3">
    <location>
        <begin position="725"/>
        <end position="744"/>
    </location>
</feature>
<feature type="compositionally biased region" description="Pro residues" evidence="3">
    <location>
        <begin position="1059"/>
        <end position="1129"/>
    </location>
</feature>
<feature type="compositionally biased region" description="Polar residues" evidence="3">
    <location>
        <begin position="1157"/>
        <end position="1175"/>
    </location>
</feature>
<feature type="compositionally biased region" description="Low complexity" evidence="3">
    <location>
        <begin position="1215"/>
        <end position="1225"/>
    </location>
</feature>
<feature type="compositionally biased region" description="Polar residues" evidence="3">
    <location>
        <begin position="1240"/>
        <end position="1255"/>
    </location>
</feature>
<feature type="compositionally biased region" description="Polar residues" evidence="3">
    <location>
        <begin position="1265"/>
        <end position="1284"/>
    </location>
</feature>
<feature type="compositionally biased region" description="Basic and acidic residues" evidence="3">
    <location>
        <begin position="1293"/>
        <end position="1306"/>
    </location>
</feature>
<feature type="compositionally biased region" description="Polar residues" evidence="3">
    <location>
        <begin position="1311"/>
        <end position="1320"/>
    </location>
</feature>
<feature type="sequence variant" description="In strain: cv. Sy-0; causes late flowering phenotype." evidence="7">
    <original>K</original>
    <variation>E</variation>
    <location>
        <position position="525"/>
    </location>
</feature>
<organism>
    <name type="scientific">Arabidopsis thaliana</name>
    <name type="common">Mouse-ear cress</name>
    <dbReference type="NCBI Taxonomy" id="3702"/>
    <lineage>
        <taxon>Eukaryota</taxon>
        <taxon>Viridiplantae</taxon>
        <taxon>Streptophyta</taxon>
        <taxon>Embryophyta</taxon>
        <taxon>Tracheophyta</taxon>
        <taxon>Spermatophyta</taxon>
        <taxon>Magnoliopsida</taxon>
        <taxon>eudicotyledons</taxon>
        <taxon>Gunneridae</taxon>
        <taxon>Pentapetalae</taxon>
        <taxon>rosids</taxon>
        <taxon>malvids</taxon>
        <taxon>Brassicales</taxon>
        <taxon>Brassicaceae</taxon>
        <taxon>Camelineae</taxon>
        <taxon>Arabidopsis</taxon>
    </lineage>
</organism>
<gene>
    <name evidence="10" type="primary">HUA2</name>
    <name type="synonym">ART1</name>
    <name evidence="12" type="ordered locus">At5g23150</name>
    <name type="ORF">MKD15</name>
    <name type="ORF">MYJ24.14</name>
</gene>
<reference key="1">
    <citation type="journal article" date="1999" name="Mol. Cell">
        <title>HUA1 and HUA2 are two members of the floral homeotic AGAMOUS pathway.</title>
        <authorList>
            <person name="Chen X."/>
            <person name="Meyerowitz E.M."/>
        </authorList>
    </citation>
    <scope>NUCLEOTIDE SEQUENCE [MRNA]</scope>
    <scope>FUNCTION</scope>
    <scope>TISSUE SPECIFICITY</scope>
    <source>
        <strain>cv. Columbia</strain>
    </source>
</reference>
<reference key="2">
    <citation type="journal article" date="1997" name="DNA Res.">
        <title>Structural analysis of Arabidopsis thaliana chromosome 5. III. Sequence features of the regions of 1,191,918 bp covered by seventeen physically assigned P1 clones.</title>
        <authorList>
            <person name="Nakamura Y."/>
            <person name="Sato S."/>
            <person name="Kaneko T."/>
            <person name="Kotani H."/>
            <person name="Asamizu E."/>
            <person name="Miyajima N."/>
            <person name="Tabata S."/>
        </authorList>
    </citation>
    <scope>NUCLEOTIDE SEQUENCE [LARGE SCALE GENOMIC DNA]</scope>
    <source>
        <strain>cv. Columbia</strain>
    </source>
</reference>
<reference key="3">
    <citation type="journal article" date="1997" name="DNA Res.">
        <title>Structural analysis of Arabidopsis thaliana chromosome 5. II. Sequence features of the regions of 1,044,062 bp covered by thirteen physically assigned P1 clones.</title>
        <authorList>
            <person name="Kotani H."/>
            <person name="Nakamura Y."/>
            <person name="Sato S."/>
            <person name="Kaneko T."/>
            <person name="Asamizu E."/>
            <person name="Miyajima N."/>
            <person name="Tabata S."/>
        </authorList>
    </citation>
    <scope>NUCLEOTIDE SEQUENCE [LARGE SCALE GENOMIC DNA]</scope>
    <source>
        <strain>cv. Columbia</strain>
    </source>
</reference>
<reference key="4">
    <citation type="journal article" date="2017" name="Plant J.">
        <title>Araport11: a complete reannotation of the Arabidopsis thaliana reference genome.</title>
        <authorList>
            <person name="Cheng C.Y."/>
            <person name="Krishnakumar V."/>
            <person name="Chan A.P."/>
            <person name="Thibaud-Nissen F."/>
            <person name="Schobel S."/>
            <person name="Town C.D."/>
        </authorList>
    </citation>
    <scope>GENOME REANNOTATION</scope>
    <source>
        <strain>cv. Columbia</strain>
    </source>
</reference>
<reference key="5">
    <citation type="submission" date="2009-03" db="EMBL/GenBank/DDBJ databases">
        <title>ORF cloning and analysis of Arabidopsis transcription factor genes.</title>
        <authorList>
            <person name="Fujita M."/>
            <person name="Mizukado S."/>
            <person name="Seki M."/>
            <person name="Shinozaki K."/>
            <person name="Mitsuda N."/>
            <person name="Takiguchi Y."/>
            <person name="Takagi M."/>
        </authorList>
    </citation>
    <scope>NUCLEOTIDE SEQUENCE [LARGE SCALE MRNA]</scope>
</reference>
<reference key="6">
    <citation type="journal article" date="2003" name="Dev. Cell">
        <title>Two RNA binding proteins, HEN4 and HUA1, act in the processing of AGAMOUS pre-mRNA in Arabidopsis thaliana.</title>
        <authorList>
            <person name="Cheng Y."/>
            <person name="Kato N."/>
            <person name="Wang W."/>
            <person name="Li J."/>
            <person name="Chen X."/>
        </authorList>
    </citation>
    <scope>FUNCTION</scope>
</reference>
<reference key="7">
    <citation type="journal article" date="2005" name="Plant J.">
        <title>HUA2 is required for the expression of floral repressors in Arabidopsis thaliana.</title>
        <authorList>
            <person name="Doyle M.R."/>
            <person name="Bizzell C.M."/>
            <person name="Keller M.R."/>
            <person name="Michaels S.D."/>
            <person name="Song J."/>
            <person name="Noh Y.-S."/>
            <person name="Amasino R.M."/>
        </authorList>
    </citation>
    <scope>FUNCTION</scope>
    <scope>DISRUPTION PHENOTYPE</scope>
</reference>
<reference key="8">
    <citation type="journal article" date="2007" name="Curr. Biol.">
        <title>HUA2 caused natural variation in shoot morphology of A. thaliana.</title>
        <authorList>
            <person name="Wang Q."/>
            <person name="Sajja U."/>
            <person name="Rosloski S."/>
            <person name="Humphrey T."/>
            <person name="Kim M.C."/>
            <person name="Bomblies K."/>
            <person name="Weigel D."/>
            <person name="Grbic V."/>
        </authorList>
    </citation>
    <scope>VARIANT GLU-525</scope>
    <source>
        <strain>cv. Sy-0</strain>
    </source>
</reference>
<reference key="9">
    <citation type="journal article" date="2014" name="Plant J.">
        <title>A plant-specific HUA2-LIKE (HULK) gene family in Arabidopsis thaliana is essential for development.</title>
        <authorList>
            <person name="Jali S.S."/>
            <person name="Rosloski S.M."/>
            <person name="Janakirama P."/>
            <person name="Steffen J.G."/>
            <person name="Zhurov V."/>
            <person name="Berleth T."/>
            <person name="Clark R.M."/>
            <person name="Grbic V."/>
        </authorList>
    </citation>
    <scope>SUBCELLULAR LOCATION</scope>
</reference>
<reference key="10">
    <citation type="journal article" date="2015" name="New Phytol.">
        <title>Natural variation for anthocyanin accumulation under high-light and low-temperature stress is attributable to the ENHANCER OF AG-4 2 (HUA2) locus in combination with PRODUCTION OF ANTHOCYANIN PIGMENT1 (PAP1) and PAP2.</title>
        <authorList>
            <person name="Ilk N."/>
            <person name="Ding J."/>
            <person name="Ihnatowicz A."/>
            <person name="Koornneef M."/>
            <person name="Reymond M."/>
        </authorList>
    </citation>
    <scope>FUNCTION</scope>
</reference>
<evidence type="ECO:0000255" key="1">
    <source>
        <dbReference type="PROSITE-ProRule" id="PRU00162"/>
    </source>
</evidence>
<evidence type="ECO:0000255" key="2">
    <source>
        <dbReference type="PROSITE-ProRule" id="PRU00724"/>
    </source>
</evidence>
<evidence type="ECO:0000256" key="3">
    <source>
        <dbReference type="SAM" id="MobiDB-lite"/>
    </source>
</evidence>
<evidence type="ECO:0000269" key="4">
    <source>
    </source>
</evidence>
<evidence type="ECO:0000269" key="5">
    <source>
    </source>
</evidence>
<evidence type="ECO:0000269" key="6">
    <source>
    </source>
</evidence>
<evidence type="ECO:0000269" key="7">
    <source>
    </source>
</evidence>
<evidence type="ECO:0000269" key="8">
    <source>
    </source>
</evidence>
<evidence type="ECO:0000269" key="9">
    <source>
    </source>
</evidence>
<evidence type="ECO:0000303" key="10">
    <source>
    </source>
</evidence>
<evidence type="ECO:0000305" key="11">
    <source>
    </source>
</evidence>
<evidence type="ECO:0000312" key="12">
    <source>
        <dbReference type="Araport" id="AT5G23150"/>
    </source>
</evidence>
<protein>
    <recommendedName>
        <fullName>ENHANCER OF AG-4 protein 2</fullName>
    </recommendedName>
    <alternativeName>
        <fullName>Protein AERIAL ROSETTE 1</fullName>
    </alternativeName>
</protein>
<dbReference type="EMBL" id="AF116556">
    <property type="protein sequence ID" value="AAD31171.1"/>
    <property type="molecule type" value="mRNA"/>
</dbReference>
<dbReference type="EMBL" id="AB007648">
    <property type="protein sequence ID" value="BAB11170.1"/>
    <property type="molecule type" value="Genomic_DNA"/>
</dbReference>
<dbReference type="EMBL" id="AB006708">
    <property type="protein sequence ID" value="BAB11170.1"/>
    <property type="status" value="JOINED"/>
    <property type="molecule type" value="Genomic_DNA"/>
</dbReference>
<dbReference type="EMBL" id="CP002688">
    <property type="protein sequence ID" value="AED93127.1"/>
    <property type="molecule type" value="Genomic_DNA"/>
</dbReference>
<dbReference type="EMBL" id="CP002688">
    <property type="protein sequence ID" value="ANM69147.1"/>
    <property type="molecule type" value="Genomic_DNA"/>
</dbReference>
<dbReference type="EMBL" id="AB493755">
    <property type="protein sequence ID" value="BAH30593.1"/>
    <property type="molecule type" value="mRNA"/>
</dbReference>
<dbReference type="PIR" id="T51947">
    <property type="entry name" value="T51947"/>
</dbReference>
<dbReference type="RefSeq" id="NP_001330848.1">
    <property type="nucleotide sequence ID" value="NM_001343792.1"/>
</dbReference>
<dbReference type="RefSeq" id="NP_197706.1">
    <property type="nucleotide sequence ID" value="NM_122221.3"/>
</dbReference>
<dbReference type="SMR" id="Q9XER9"/>
<dbReference type="BioGRID" id="17654">
    <property type="interactions" value="6"/>
</dbReference>
<dbReference type="FunCoup" id="Q9XER9">
    <property type="interactions" value="1633"/>
</dbReference>
<dbReference type="STRING" id="3702.Q9XER9"/>
<dbReference type="iPTMnet" id="Q9XER9"/>
<dbReference type="PaxDb" id="3702-AT5G23150.1"/>
<dbReference type="ProteomicsDB" id="230254"/>
<dbReference type="EnsemblPlants" id="AT5G23150.1">
    <property type="protein sequence ID" value="AT5G23150.1"/>
    <property type="gene ID" value="AT5G23150"/>
</dbReference>
<dbReference type="EnsemblPlants" id="AT5G23150.3">
    <property type="protein sequence ID" value="AT5G23150.3"/>
    <property type="gene ID" value="AT5G23150"/>
</dbReference>
<dbReference type="GeneID" id="832379"/>
<dbReference type="Gramene" id="AT5G23150.1">
    <property type="protein sequence ID" value="AT5G23150.1"/>
    <property type="gene ID" value="AT5G23150"/>
</dbReference>
<dbReference type="Gramene" id="AT5G23150.3">
    <property type="protein sequence ID" value="AT5G23150.3"/>
    <property type="gene ID" value="AT5G23150"/>
</dbReference>
<dbReference type="KEGG" id="ath:AT5G23150"/>
<dbReference type="Araport" id="AT5G23150"/>
<dbReference type="TAIR" id="AT5G23150">
    <property type="gene designation" value="HUA2"/>
</dbReference>
<dbReference type="eggNOG" id="KOG1904">
    <property type="taxonomic scope" value="Eukaryota"/>
</dbReference>
<dbReference type="HOGENOM" id="CLU_005040_0_0_1"/>
<dbReference type="InParanoid" id="Q9XER9"/>
<dbReference type="OMA" id="GKHENSP"/>
<dbReference type="PhylomeDB" id="Q9XER9"/>
<dbReference type="PRO" id="PR:Q9XER9"/>
<dbReference type="Proteomes" id="UP000006548">
    <property type="component" value="Chromosome 5"/>
</dbReference>
<dbReference type="ExpressionAtlas" id="Q9XER9">
    <property type="expression patterns" value="baseline and differential"/>
</dbReference>
<dbReference type="GO" id="GO:0005634">
    <property type="term" value="C:nucleus"/>
    <property type="evidence" value="ECO:0000314"/>
    <property type="project" value="TAIR"/>
</dbReference>
<dbReference type="GO" id="GO:0003700">
    <property type="term" value="F:DNA-binding transcription factor activity"/>
    <property type="evidence" value="ECO:0000250"/>
    <property type="project" value="TAIR"/>
</dbReference>
<dbReference type="GO" id="GO:0043481">
    <property type="term" value="P:anthocyanin accumulation in tissues in response to UV light"/>
    <property type="evidence" value="ECO:0000315"/>
    <property type="project" value="UniProtKB"/>
</dbReference>
<dbReference type="GO" id="GO:0030154">
    <property type="term" value="P:cell differentiation"/>
    <property type="evidence" value="ECO:0007669"/>
    <property type="project" value="UniProtKB-KW"/>
</dbReference>
<dbReference type="GO" id="GO:0048497">
    <property type="term" value="P:maintenance of floral organ identity"/>
    <property type="evidence" value="ECO:0000315"/>
    <property type="project" value="TAIR"/>
</dbReference>
<dbReference type="GO" id="GO:0006397">
    <property type="term" value="P:mRNA processing"/>
    <property type="evidence" value="ECO:0000315"/>
    <property type="project" value="UniProtKB"/>
</dbReference>
<dbReference type="GO" id="GO:0009910">
    <property type="term" value="P:negative regulation of flower development"/>
    <property type="evidence" value="ECO:0000315"/>
    <property type="project" value="TAIR"/>
</dbReference>
<dbReference type="GO" id="GO:0048510">
    <property type="term" value="P:regulation of timing of transition from vegetative to reproductive phase"/>
    <property type="evidence" value="ECO:0000315"/>
    <property type="project" value="TAIR"/>
</dbReference>
<dbReference type="CDD" id="cd20147">
    <property type="entry name" value="PWWP_HULK"/>
    <property type="match status" value="1"/>
</dbReference>
<dbReference type="FunFam" id="1.25.40.90:FF:000037">
    <property type="entry name" value="Enhancer of ag-4 2"/>
    <property type="match status" value="1"/>
</dbReference>
<dbReference type="Gene3D" id="1.25.40.90">
    <property type="match status" value="1"/>
</dbReference>
<dbReference type="Gene3D" id="2.30.30.140">
    <property type="match status" value="1"/>
</dbReference>
<dbReference type="InterPro" id="IPR006569">
    <property type="entry name" value="CID_dom"/>
</dbReference>
<dbReference type="InterPro" id="IPR008942">
    <property type="entry name" value="ENTH_VHS"/>
</dbReference>
<dbReference type="InterPro" id="IPR000313">
    <property type="entry name" value="PWWP_dom"/>
</dbReference>
<dbReference type="PANTHER" id="PTHR12550">
    <property type="entry name" value="HEPATOMA-DERIVED GROWTH FACTOR-RELATED"/>
    <property type="match status" value="1"/>
</dbReference>
<dbReference type="PANTHER" id="PTHR12550:SF70">
    <property type="entry name" value="JIL-1 ANCHORING AND STABILIZING PROTEIN, ISOFORM A"/>
    <property type="match status" value="1"/>
</dbReference>
<dbReference type="Pfam" id="PF04818">
    <property type="entry name" value="CID"/>
    <property type="match status" value="1"/>
</dbReference>
<dbReference type="Pfam" id="PF00855">
    <property type="entry name" value="PWWP"/>
    <property type="match status" value="1"/>
</dbReference>
<dbReference type="PRINTS" id="PR01217">
    <property type="entry name" value="PRICHEXTENSN"/>
</dbReference>
<dbReference type="SMART" id="SM00293">
    <property type="entry name" value="PWWP"/>
    <property type="match status" value="1"/>
</dbReference>
<dbReference type="SMART" id="SM00582">
    <property type="entry name" value="RPR"/>
    <property type="match status" value="1"/>
</dbReference>
<dbReference type="SUPFAM" id="SSF48464">
    <property type="entry name" value="ENTH/VHS domain"/>
    <property type="match status" value="1"/>
</dbReference>
<dbReference type="SUPFAM" id="SSF63748">
    <property type="entry name" value="Tudor/PWWP/MBT"/>
    <property type="match status" value="1"/>
</dbReference>
<dbReference type="PROSITE" id="PS51391">
    <property type="entry name" value="CID"/>
    <property type="match status" value="1"/>
</dbReference>
<dbReference type="PROSITE" id="PS50812">
    <property type="entry name" value="PWWP"/>
    <property type="match status" value="1"/>
</dbReference>
<proteinExistence type="evidence at transcript level"/>
<sequence length="1392" mass="151078">MAPGRKRGASKAKAKGQLVLGDLVLAKVKGFPAWPAKISRPEDWDRAPDPKKYFVQFFGTEEIAFVAPPDIQAFTSEAKSKLLARCQGKTVKYFAQAVEQICTAFEGLQNHKSNALGDEDSLDATEPGLTKAEIVDGTDHIVIESERTDNFNFRVDPCFPKLDENNGEERKAEIRKLDSSSFLESKVKTTSPVSESLEHSSFDPKIKKEDFDKGTDGSACNEHFGNGQKKLANGKRIKKEAGGSDRKGEDTVHRDKSNNSHVPGGRTASGNSDSKKSKGLLTEKTSSKVSADKHENSPGIKVGVSGKKRRLESEQGKLAPRVDESSRAAKKPRCESADNKVKCEIDDGSDSTGTVSDIKREIVLGLGARGGNFQYDKEAVAYTKRQRQTMEHATSPSFSGSRDKSGKGHLEQKDRSSPVRNVKAPAAQSLKKRRAVCIYDEDDDEDPKTPLHGKPAIVPQAASVLTDGPKRANVCHSTSTKAKISAGSTESTEVRKFPLRKHCEDASRVLPSNAENSTNSLPVVKPINELPPKDVKQILQSPKMSPQLVLTNKHVAGQHKVVKSSVKVSGVVMAKKPQSDSCKEAVAGSDKISSSQSQPANQRHKSASVGERLTVVSKAASRLNDSGSRDMSEDLSAAMLDLNREKGSATFTSAKTPDSAASMKDLIAAAQAKRKLAHTQNSIFGNLNPSFLSISDTQGRSHSPFMVQNASASAAISMPLVVQGHHQQGSSPSNHGHQSLSRNQIETDDNEERRLSSGHKSVGGSLSCSTEAAISRDAFEGMLETLSRTRESIGRATRLAIDCAKYGLASEVVELLIRKLESESHFHRKVDLFFLVDSITQHSHSQKGIAGASYVPTVQAALPRLLGAAAPPGTGASDNRRKCLKVLKLWLERKVFPESLLRRYIDDIRASGDDATGGFSLRRPSRSERAVDDPIREMEGMLVDEYGSNATFQLPGFFSSHNFEDDEEDDDLPTSQKEKSTSAGERVSALDDLEIHDTSSDKCHRVLEDVDHELEMEDVSGQRKDVAPSSFCENKTKEQSLDVMEPVAEKSTEFNPLPEDSPPLPQESPPPLPPLPPSPPPPSPPLPPSSLPPPPPAALFPPLPPPPSQPPPPPLSPPPSPPPPPPPPSQSLTTQLSIASHHQIPFQPGFPPPTYPLSHQTYPGSMQQDRSSIFTGDQIVQGPGNSSRGGLVEGAGKPEYFVQQSSSFSPAGVCSSREPSSFTSSRQLEFGNSDVLFNPEASSQNHRFQPSTPLSQRPMVRLPSAPSSHFSYPSHIQSQSQHSYTHPYPFPPQRDDARRYRNEEPWRIPSSGHSAENQNGAWIHGRNSHPGLPRVTDSFFRPPPERPPSGTMNYQPSAASNLQAVPAIPGHTAPQMLPSRPDIPTVNCWRPA</sequence>
<comment type="function">
    <text evidence="4 5 6 9">Transcription factor that functions as a repressor of flowering by enhancing the expression of several genes that delay flowering including FLC, FLM/MAF1, MAF2 and SVP (PubMed:15659097). Also acts in the floral homeotic AGAMOUS (AG) pathway, specifically by processing the AGAMOUS pre-mRNA (PubMed:10198637, PubMed:12530963). Functions in association with HUA1 and HEN4 in AG pre-mRNA processing (PubMed:12530963). Involved in all three aspects of the AG functions, the specification of stamen and carpel identities, the control of floral determinacy, and the spatial restriction of AP1 expression (PubMed:10198637, PubMed:12530963, PubMed:15659097). Acts as a transcription regulator that controls anthocyanin accumulation (PubMed:25425527).</text>
</comment>
<comment type="subcellular location">
    <subcellularLocation>
        <location evidence="8">Nucleus</location>
    </subcellularLocation>
</comment>
<comment type="tissue specificity">
    <text evidence="4">Expressed in the inflorescence meristem, floral primordia, inflorescence stem, and floral pedicels. Also detected in the shoot apical meristem, stems, leaves, embryos, and roots.</text>
</comment>
<comment type="disruption phenotype">
    <text evidence="6">Hua2 mutations enhance the phenotype of mild ag-4 and elf4 alleles and also induce early flowering by reducing the expression of several MADS genes that act as floral repressors like FLC, FLM/MAF1, MAF2 and SVP.</text>
</comment>
<comment type="miscellaneous">
    <text evidence="11">In cv. Sy-0, a naturally occurring allele K525E, termed ART1, together with active FRI and FLC alleles causes delayed flowering of primary and axillary meristems, resulting in the distinctive Sy-0 morphology (PubMed:17764945).</text>
</comment>
<keyword id="KW-0217">Developmental protein</keyword>
<keyword id="KW-0221">Differentiation</keyword>
<keyword id="KW-0287">Flowering</keyword>
<keyword id="KW-0507">mRNA processing</keyword>
<keyword id="KW-0539">Nucleus</keyword>
<keyword id="KW-1185">Reference proteome</keyword>
<keyword id="KW-0804">Transcription</keyword>
<keyword id="KW-0805">Transcription regulation</keyword>
<name>HUA2_ARATH</name>